<feature type="chain" id="PRO_1000138403" description="Heat shock protein HspQ">
    <location>
        <begin position="1"/>
        <end position="105"/>
    </location>
</feature>
<feature type="region of interest" description="Disordered" evidence="2">
    <location>
        <begin position="75"/>
        <end position="105"/>
    </location>
</feature>
<proteinExistence type="inferred from homology"/>
<name>HSPQ_ECO45</name>
<organism>
    <name type="scientific">Escherichia coli O45:K1 (strain S88 / ExPEC)</name>
    <dbReference type="NCBI Taxonomy" id="585035"/>
    <lineage>
        <taxon>Bacteria</taxon>
        <taxon>Pseudomonadati</taxon>
        <taxon>Pseudomonadota</taxon>
        <taxon>Gammaproteobacteria</taxon>
        <taxon>Enterobacterales</taxon>
        <taxon>Enterobacteriaceae</taxon>
        <taxon>Escherichia</taxon>
    </lineage>
</organism>
<comment type="function">
    <text evidence="1">Involved in the degradation of certain denaturated proteins, including DnaA, during heat shock stress.</text>
</comment>
<comment type="subcellular location">
    <subcellularLocation>
        <location evidence="1">Cytoplasm</location>
    </subcellularLocation>
</comment>
<comment type="similarity">
    <text evidence="1">Belongs to the HspQ family.</text>
</comment>
<reference key="1">
    <citation type="journal article" date="2009" name="PLoS Genet.">
        <title>Organised genome dynamics in the Escherichia coli species results in highly diverse adaptive paths.</title>
        <authorList>
            <person name="Touchon M."/>
            <person name="Hoede C."/>
            <person name="Tenaillon O."/>
            <person name="Barbe V."/>
            <person name="Baeriswyl S."/>
            <person name="Bidet P."/>
            <person name="Bingen E."/>
            <person name="Bonacorsi S."/>
            <person name="Bouchier C."/>
            <person name="Bouvet O."/>
            <person name="Calteau A."/>
            <person name="Chiapello H."/>
            <person name="Clermont O."/>
            <person name="Cruveiller S."/>
            <person name="Danchin A."/>
            <person name="Diard M."/>
            <person name="Dossat C."/>
            <person name="Karoui M.E."/>
            <person name="Frapy E."/>
            <person name="Garry L."/>
            <person name="Ghigo J.M."/>
            <person name="Gilles A.M."/>
            <person name="Johnson J."/>
            <person name="Le Bouguenec C."/>
            <person name="Lescat M."/>
            <person name="Mangenot S."/>
            <person name="Martinez-Jehanne V."/>
            <person name="Matic I."/>
            <person name="Nassif X."/>
            <person name="Oztas S."/>
            <person name="Petit M.A."/>
            <person name="Pichon C."/>
            <person name="Rouy Z."/>
            <person name="Ruf C.S."/>
            <person name="Schneider D."/>
            <person name="Tourret J."/>
            <person name="Vacherie B."/>
            <person name="Vallenet D."/>
            <person name="Medigue C."/>
            <person name="Rocha E.P.C."/>
            <person name="Denamur E."/>
        </authorList>
    </citation>
    <scope>NUCLEOTIDE SEQUENCE [LARGE SCALE GENOMIC DNA]</scope>
    <source>
        <strain>S88 / ExPEC</strain>
    </source>
</reference>
<accession>B7MIC0</accession>
<evidence type="ECO:0000255" key="1">
    <source>
        <dbReference type="HAMAP-Rule" id="MF_01194"/>
    </source>
</evidence>
<evidence type="ECO:0000256" key="2">
    <source>
        <dbReference type="SAM" id="MobiDB-lite"/>
    </source>
</evidence>
<sequence length="105" mass="11779">MIASKFGIGQQVRHSLLGYLGVVVDIDPVYSLSEPSPDELAVNDELRAAPWYHVVMEDDNGLPVHTYLAEAQLSSELQDEHPEQPSMDELAQTIRKQLQAPRLRN</sequence>
<gene>
    <name evidence="1" type="primary">hspQ</name>
    <name type="ordered locus">ECS88_0988</name>
</gene>
<keyword id="KW-0963">Cytoplasm</keyword>
<keyword id="KW-1185">Reference proteome</keyword>
<keyword id="KW-0346">Stress response</keyword>
<protein>
    <recommendedName>
        <fullName evidence="1">Heat shock protein HspQ</fullName>
    </recommendedName>
</protein>
<dbReference type="EMBL" id="CU928161">
    <property type="protein sequence ID" value="CAR02320.1"/>
    <property type="molecule type" value="Genomic_DNA"/>
</dbReference>
<dbReference type="RefSeq" id="WP_001295356.1">
    <property type="nucleotide sequence ID" value="NC_011742.1"/>
</dbReference>
<dbReference type="SMR" id="B7MIC0"/>
<dbReference type="GeneID" id="93776448"/>
<dbReference type="KEGG" id="ecz:ECS88_0988"/>
<dbReference type="HOGENOM" id="CLU_123865_1_0_6"/>
<dbReference type="Proteomes" id="UP000000747">
    <property type="component" value="Chromosome"/>
</dbReference>
<dbReference type="GO" id="GO:0005737">
    <property type="term" value="C:cytoplasm"/>
    <property type="evidence" value="ECO:0007669"/>
    <property type="project" value="UniProtKB-SubCell"/>
</dbReference>
<dbReference type="GO" id="GO:0003677">
    <property type="term" value="F:DNA binding"/>
    <property type="evidence" value="ECO:0007669"/>
    <property type="project" value="InterPro"/>
</dbReference>
<dbReference type="GO" id="GO:0009408">
    <property type="term" value="P:response to heat"/>
    <property type="evidence" value="ECO:0007669"/>
    <property type="project" value="UniProtKB-UniRule"/>
</dbReference>
<dbReference type="Gene3D" id="2.30.30.390">
    <property type="entry name" value="Hemimethylated DNA-binding domain"/>
    <property type="match status" value="1"/>
</dbReference>
<dbReference type="HAMAP" id="MF_01194">
    <property type="entry name" value="HspQ"/>
    <property type="match status" value="1"/>
</dbReference>
<dbReference type="InterPro" id="IPR011722">
    <property type="entry name" value="Hemimethylated_DNA-bd_dom"/>
</dbReference>
<dbReference type="InterPro" id="IPR036623">
    <property type="entry name" value="Hemimethylated_DNA-bd_sf"/>
</dbReference>
<dbReference type="InterPro" id="IPR022866">
    <property type="entry name" value="HspQ"/>
</dbReference>
<dbReference type="NCBIfam" id="NF010729">
    <property type="entry name" value="PRK14129.1"/>
    <property type="match status" value="1"/>
</dbReference>
<dbReference type="NCBIfam" id="TIGR02097">
    <property type="entry name" value="yccV"/>
    <property type="match status" value="1"/>
</dbReference>
<dbReference type="Pfam" id="PF08755">
    <property type="entry name" value="YccV-like"/>
    <property type="match status" value="1"/>
</dbReference>
<dbReference type="SMART" id="SM00992">
    <property type="entry name" value="YccV-like"/>
    <property type="match status" value="1"/>
</dbReference>
<dbReference type="SUPFAM" id="SSF141255">
    <property type="entry name" value="YccV-like"/>
    <property type="match status" value="1"/>
</dbReference>